<reference key="1">
    <citation type="journal article" date="2003" name="Proc. Natl. Acad. Sci. U.S.A.">
        <title>Genome sequence of the cyanobacterium Prochlorococcus marinus SS120, a nearly minimal oxyphototrophic genome.</title>
        <authorList>
            <person name="Dufresne A."/>
            <person name="Salanoubat M."/>
            <person name="Partensky F."/>
            <person name="Artiguenave F."/>
            <person name="Axmann I.M."/>
            <person name="Barbe V."/>
            <person name="Duprat S."/>
            <person name="Galperin M.Y."/>
            <person name="Koonin E.V."/>
            <person name="Le Gall F."/>
            <person name="Makarova K.S."/>
            <person name="Ostrowski M."/>
            <person name="Oztas S."/>
            <person name="Robert C."/>
            <person name="Rogozin I.B."/>
            <person name="Scanlan D.J."/>
            <person name="Tandeau de Marsac N."/>
            <person name="Weissenbach J."/>
            <person name="Wincker P."/>
            <person name="Wolf Y.I."/>
            <person name="Hess W.R."/>
        </authorList>
    </citation>
    <scope>NUCLEOTIDE SEQUENCE [LARGE SCALE GENOMIC DNA]</scope>
    <source>
        <strain>SARG / CCMP1375 / SS120</strain>
    </source>
</reference>
<name>ISPG_PROMA</name>
<accession>Q7VBS7</accession>
<proteinExistence type="inferred from homology"/>
<comment type="function">
    <text evidence="1">Converts 2C-methyl-D-erythritol 2,4-cyclodiphosphate (ME-2,4cPP) into 1-hydroxy-2-methyl-2-(E)-butenyl 4-diphosphate.</text>
</comment>
<comment type="catalytic activity">
    <reaction evidence="1">
        <text>(2E)-4-hydroxy-3-methylbut-2-enyl diphosphate + 2 oxidized [2Fe-2S]-[ferredoxin] + H2O = 2-C-methyl-D-erythritol 2,4-cyclic diphosphate + 2 reduced [2Fe-2S]-[ferredoxin] + H(+)</text>
        <dbReference type="Rhea" id="RHEA:26119"/>
        <dbReference type="Rhea" id="RHEA-COMP:10000"/>
        <dbReference type="Rhea" id="RHEA-COMP:10001"/>
        <dbReference type="ChEBI" id="CHEBI:15377"/>
        <dbReference type="ChEBI" id="CHEBI:15378"/>
        <dbReference type="ChEBI" id="CHEBI:33737"/>
        <dbReference type="ChEBI" id="CHEBI:33738"/>
        <dbReference type="ChEBI" id="CHEBI:58483"/>
        <dbReference type="ChEBI" id="CHEBI:128753"/>
        <dbReference type="EC" id="1.17.7.1"/>
    </reaction>
</comment>
<comment type="cofactor">
    <cofactor evidence="1">
        <name>[4Fe-4S] cluster</name>
        <dbReference type="ChEBI" id="CHEBI:49883"/>
    </cofactor>
    <text evidence="1">Binds 1 [4Fe-4S] cluster.</text>
</comment>
<comment type="pathway">
    <text evidence="1">Isoprenoid biosynthesis; isopentenyl diphosphate biosynthesis via DXP pathway; isopentenyl diphosphate from 1-deoxy-D-xylulose 5-phosphate: step 5/6.</text>
</comment>
<comment type="similarity">
    <text evidence="1">Belongs to the IspG family.</text>
</comment>
<gene>
    <name evidence="1" type="primary">ispG</name>
    <name type="synonym">gcpE</name>
    <name type="ordered locus">Pro_1015</name>
</gene>
<protein>
    <recommendedName>
        <fullName evidence="1">4-hydroxy-3-methylbut-2-en-1-yl diphosphate synthase (ferredoxin)</fullName>
        <ecNumber evidence="1">1.17.7.1</ecNumber>
    </recommendedName>
    <alternativeName>
        <fullName evidence="1">1-hydroxy-2-methyl-2-(E)-butenyl 4-diphosphate synthase</fullName>
    </alternativeName>
</protein>
<organism>
    <name type="scientific">Prochlorococcus marinus (strain SARG / CCMP1375 / SS120)</name>
    <dbReference type="NCBI Taxonomy" id="167539"/>
    <lineage>
        <taxon>Bacteria</taxon>
        <taxon>Bacillati</taxon>
        <taxon>Cyanobacteriota</taxon>
        <taxon>Cyanophyceae</taxon>
        <taxon>Synechococcales</taxon>
        <taxon>Prochlorococcaceae</taxon>
        <taxon>Prochlorococcus</taxon>
    </lineage>
</organism>
<dbReference type="EC" id="1.17.7.1" evidence="1"/>
<dbReference type="EMBL" id="AE017126">
    <property type="protein sequence ID" value="AAQ00060.1"/>
    <property type="molecule type" value="Genomic_DNA"/>
</dbReference>
<dbReference type="RefSeq" id="NP_875407.1">
    <property type="nucleotide sequence ID" value="NC_005042.1"/>
</dbReference>
<dbReference type="RefSeq" id="WP_011125167.1">
    <property type="nucleotide sequence ID" value="NC_005042.1"/>
</dbReference>
<dbReference type="SMR" id="Q7VBS7"/>
<dbReference type="STRING" id="167539.Pro_1015"/>
<dbReference type="EnsemblBacteria" id="AAQ00060">
    <property type="protein sequence ID" value="AAQ00060"/>
    <property type="gene ID" value="Pro_1015"/>
</dbReference>
<dbReference type="KEGG" id="pma:Pro_1015"/>
<dbReference type="PATRIC" id="fig|167539.5.peg.1066"/>
<dbReference type="eggNOG" id="COG0821">
    <property type="taxonomic scope" value="Bacteria"/>
</dbReference>
<dbReference type="HOGENOM" id="CLU_042258_0_0_3"/>
<dbReference type="OrthoDB" id="9803214at2"/>
<dbReference type="UniPathway" id="UPA00056">
    <property type="reaction ID" value="UER00096"/>
</dbReference>
<dbReference type="Proteomes" id="UP000001420">
    <property type="component" value="Chromosome"/>
</dbReference>
<dbReference type="GO" id="GO:0051539">
    <property type="term" value="F:4 iron, 4 sulfur cluster binding"/>
    <property type="evidence" value="ECO:0007669"/>
    <property type="project" value="UniProtKB-UniRule"/>
</dbReference>
<dbReference type="GO" id="GO:0046429">
    <property type="term" value="F:4-hydroxy-3-methylbut-2-en-1-yl diphosphate synthase activity (ferredoxin)"/>
    <property type="evidence" value="ECO:0007669"/>
    <property type="project" value="UniProtKB-UniRule"/>
</dbReference>
<dbReference type="GO" id="GO:0005506">
    <property type="term" value="F:iron ion binding"/>
    <property type="evidence" value="ECO:0007669"/>
    <property type="project" value="InterPro"/>
</dbReference>
<dbReference type="GO" id="GO:0019288">
    <property type="term" value="P:isopentenyl diphosphate biosynthetic process, methylerythritol 4-phosphate pathway"/>
    <property type="evidence" value="ECO:0007669"/>
    <property type="project" value="UniProtKB-UniRule"/>
</dbReference>
<dbReference type="GO" id="GO:0016114">
    <property type="term" value="P:terpenoid biosynthetic process"/>
    <property type="evidence" value="ECO:0007669"/>
    <property type="project" value="InterPro"/>
</dbReference>
<dbReference type="FunFam" id="3.20.20.20:FF:000005">
    <property type="entry name" value="4-hydroxy-3-methylbut-2-en-1-yl diphosphate synthase (flavodoxin)"/>
    <property type="match status" value="1"/>
</dbReference>
<dbReference type="Gene3D" id="3.20.20.20">
    <property type="entry name" value="Dihydropteroate synthase-like"/>
    <property type="match status" value="1"/>
</dbReference>
<dbReference type="Gene3D" id="3.30.413.10">
    <property type="entry name" value="Sulfite Reductase Hemoprotein, domain 1"/>
    <property type="match status" value="1"/>
</dbReference>
<dbReference type="HAMAP" id="MF_00159">
    <property type="entry name" value="IspG"/>
    <property type="match status" value="1"/>
</dbReference>
<dbReference type="InterPro" id="IPR011005">
    <property type="entry name" value="Dihydropteroate_synth-like_sf"/>
</dbReference>
<dbReference type="InterPro" id="IPR016425">
    <property type="entry name" value="IspG_bac"/>
</dbReference>
<dbReference type="InterPro" id="IPR004588">
    <property type="entry name" value="IspG_bac-typ"/>
</dbReference>
<dbReference type="InterPro" id="IPR045854">
    <property type="entry name" value="NO2/SO3_Rdtase_4Fe4S_sf"/>
</dbReference>
<dbReference type="NCBIfam" id="TIGR00612">
    <property type="entry name" value="ispG_gcpE"/>
    <property type="match status" value="1"/>
</dbReference>
<dbReference type="NCBIfam" id="NF001540">
    <property type="entry name" value="PRK00366.1"/>
    <property type="match status" value="1"/>
</dbReference>
<dbReference type="PANTHER" id="PTHR30454">
    <property type="entry name" value="4-HYDROXY-3-METHYLBUT-2-EN-1-YL DIPHOSPHATE SYNTHASE"/>
    <property type="match status" value="1"/>
</dbReference>
<dbReference type="PANTHER" id="PTHR30454:SF0">
    <property type="entry name" value="4-HYDROXY-3-METHYLBUT-2-EN-1-YL DIPHOSPHATE SYNTHASE (FERREDOXIN), CHLOROPLASTIC"/>
    <property type="match status" value="1"/>
</dbReference>
<dbReference type="Pfam" id="PF04551">
    <property type="entry name" value="GcpE"/>
    <property type="match status" value="1"/>
</dbReference>
<dbReference type="PIRSF" id="PIRSF004640">
    <property type="entry name" value="IspG"/>
    <property type="match status" value="1"/>
</dbReference>
<dbReference type="SUPFAM" id="SSF56014">
    <property type="entry name" value="Nitrite and sulphite reductase 4Fe-4S domain-like"/>
    <property type="match status" value="1"/>
</dbReference>
<keyword id="KW-0004">4Fe-4S</keyword>
<keyword id="KW-0408">Iron</keyword>
<keyword id="KW-0411">Iron-sulfur</keyword>
<keyword id="KW-0414">Isoprene biosynthesis</keyword>
<keyword id="KW-0479">Metal-binding</keyword>
<keyword id="KW-0560">Oxidoreductase</keyword>
<keyword id="KW-1185">Reference proteome</keyword>
<feature type="chain" id="PRO_0000190614" description="4-hydroxy-3-methylbut-2-en-1-yl diphosphate synthase (ferredoxin)">
    <location>
        <begin position="1"/>
        <end position="407"/>
    </location>
</feature>
<feature type="binding site" evidence="1">
    <location>
        <position position="316"/>
    </location>
    <ligand>
        <name>[4Fe-4S] cluster</name>
        <dbReference type="ChEBI" id="CHEBI:49883"/>
    </ligand>
</feature>
<feature type="binding site" evidence="1">
    <location>
        <position position="319"/>
    </location>
    <ligand>
        <name>[4Fe-4S] cluster</name>
        <dbReference type="ChEBI" id="CHEBI:49883"/>
    </ligand>
</feature>
<feature type="binding site" evidence="1">
    <location>
        <position position="350"/>
    </location>
    <ligand>
        <name>[4Fe-4S] cluster</name>
        <dbReference type="ChEBI" id="CHEBI:49883"/>
    </ligand>
</feature>
<feature type="binding site" evidence="1">
    <location>
        <position position="357"/>
    </location>
    <ligand>
        <name>[4Fe-4S] cluster</name>
        <dbReference type="ChEBI" id="CHEBI:49883"/>
    </ligand>
</feature>
<sequence length="407" mass="44742">MTIENTQNINIDTLSRRYSTQIQRRKTRSVMVGNIGIGSDYPVAVQSMINEDTLDIEASTSAIRRLHEIGCEIVRLTVPSLSHAKAVGEIKRRLEQNYLPVPLVADVHHNGMKIALEVAKHVDKVRINPGLFVFSNPDPSRTEFSNSEISAIKEKIINNFEPIVNTLKAQNKALRIGVNHGSLAERMLFQYGDTPLGMVESAMEFVRICDSLDFHNIVISMKASRPPVMLAAYRLMADAMDKEGFNYPLHLGVTEAGDGDYGRIKSTVGIGTLLTEGLGDTIRVSLTEAPEKEIPVAYSILQTVGLRKTMVEYISCPSCGRTLFNLEEVVAKVRDATSHLTGLDIAVMGCIVNGPGEMADADYGYVGKGKGIIALYRGREEIRKVPEDEGVSALVELIKSDGKWIDP</sequence>
<evidence type="ECO:0000255" key="1">
    <source>
        <dbReference type="HAMAP-Rule" id="MF_00159"/>
    </source>
</evidence>